<accession>P53706</accession>
<accession>C4YP26</accession>
<keyword id="KW-0067">ATP-binding</keyword>
<keyword id="KW-0325">Glycoprotein</keyword>
<keyword id="KW-0472">Membrane</keyword>
<keyword id="KW-0547">Nucleotide-binding</keyword>
<keyword id="KW-0677">Repeat</keyword>
<keyword id="KW-1278">Translocase</keyword>
<keyword id="KW-0812">Transmembrane</keyword>
<keyword id="KW-1133">Transmembrane helix</keyword>
<keyword id="KW-0813">Transport</keyword>
<organism>
    <name type="scientific">Candida albicans (strain WO-1)</name>
    <name type="common">Yeast</name>
    <dbReference type="NCBI Taxonomy" id="294748"/>
    <lineage>
        <taxon>Eukaryota</taxon>
        <taxon>Fungi</taxon>
        <taxon>Dikarya</taxon>
        <taxon>Ascomycota</taxon>
        <taxon>Saccharomycotina</taxon>
        <taxon>Pichiomycetes</taxon>
        <taxon>Debaryomycetaceae</taxon>
        <taxon>Candida/Lodderomyces clade</taxon>
        <taxon>Candida</taxon>
    </lineage>
</organism>
<proteinExistence type="inferred from homology"/>
<evidence type="ECO:0000255" key="1"/>
<evidence type="ECO:0000255" key="2">
    <source>
        <dbReference type="PROSITE-ProRule" id="PRU00434"/>
    </source>
</evidence>
<evidence type="ECO:0000255" key="3">
    <source>
        <dbReference type="PROSITE-ProRule" id="PRU00441"/>
    </source>
</evidence>
<evidence type="ECO:0000256" key="4">
    <source>
        <dbReference type="SAM" id="MobiDB-lite"/>
    </source>
</evidence>
<evidence type="ECO:0000305" key="5"/>
<comment type="catalytic activity">
    <reaction>
        <text>an [alpha-factor](in) + ATP + H2O = an [alpha-factor](out) + ADP + phosphate + H(+)</text>
        <dbReference type="Rhea" id="RHEA:10848"/>
        <dbReference type="Rhea" id="RHEA-COMP:11611"/>
        <dbReference type="ChEBI" id="CHEBI:15377"/>
        <dbReference type="ChEBI" id="CHEBI:15378"/>
        <dbReference type="ChEBI" id="CHEBI:30616"/>
        <dbReference type="ChEBI" id="CHEBI:43474"/>
        <dbReference type="ChEBI" id="CHEBI:83228"/>
        <dbReference type="ChEBI" id="CHEBI:456216"/>
        <dbReference type="EC" id="7.4.2.7"/>
    </reaction>
</comment>
<comment type="subcellular location">
    <subcellularLocation>
        <location>Membrane</location>
        <topology>Multi-pass membrane protein</topology>
    </subcellularLocation>
</comment>
<comment type="similarity">
    <text evidence="5">Belongs to the ABC transporter superfamily. Alpha-factor sex pheromone exporter (TC 3.A.1.206) family.</text>
</comment>
<sequence>MFQEKSEKSSFPKRSSSLRSPSDSPAITSKNVFMFVNYSKDWPLILVGILLMGGSAIATLMNTYIYGEIMGKLSQFYLQDQSNHSFSQDIVKLCVGLIGIGCCKMILVWLGMFTWLKFGEIQQSRARMQIYNKIINESQSWYDSKQNLIGQLTQINRCIEELRSCNGEILASLMQTIVLILALLIMSFYQSWSTTLIIMASFPIMALCGWYFGKLTYKAQQDENEVTSKASKVFNWCYVNPEMVRFFNSKNIELTKFKQLIEKSAQFYYKLSHAVAANTAVLKTLTLMMFVQGFWFGNYLLSHKTITINQLFTCFSSCLMLGQAVSGITELLAILNTGHAAADKISGFLLQPPSKAKLLLLHSKYPPFEIGSIYFKNVWFESNSQNSVAILQDVSFGILQNQFNYVIGKSGSGKSTIAKLLMRLYSVSRGTIEIDTVSIDKLDPKYICQNITLLEQNPVIFDDKTIAENIAIAIVDDYDSLQAIPYYLIEQSAHFALLSDLDLNMKVNHLTLSGGQQQRISIARAYLKNSPVLIMDESFSALDTETKQGLIEKVKKWRIGKTTIFITHEYKNILDDENVIILDQGMIKNQGQFKKMKNEEIVQNYKSQGIETSSYETTSQSFSDNTKLPDGDYNYKTNPYILKDLESQIKEDTDNEKLMGVLAILRYCSSTINGKSLLGFGILLAIFQGVSSPVFSYCFSKLLSTSLDSSIGLNSTQKILQWSCISLSIAIFTGVTSYLSEFILNYCGENWIVSLRQLTFFKLNNQDLSFFTGFDTNWSSSEITALLMNDTRDLRNLISQFFPLLANLVSMTLIGIIWSIVSGWKLALVGISFVPLVLLVTVLYGKILESIENKYKCKVNNVELDLYRTITTIRTIKIFNIQQYFETVFKEDLKVLNSIGVYRALQTGIGFAISDLFSSIGQAIILFYGMKLISQFQYNYSQLLQVITLLSFTISNASILIHQLPEITRGQRAGTFIVKLLKDITSTMEVNDSCGVSSVRKRNSKSGSDSIGTIGPVKDNQLFKKVTTDNDTLAISFNNVSFSYPNKLPYILQLKSISLDVKKFTTIGIVGQSGSGKSTILKILFRLYDIKISPDSNTTKKYHDQTVKIFNQNLYLINSGLLCQTIAIVPQFPKFFSGTIYDNLTYGINNTNSAGSNSSSSVSDSEIIKILKLVNLHQFIVSLPQGLLTIMNDSDNDNDNGNENENENENGNTISTSSSTSFTFSGGQLQLLAIARALLRNPKILLLDECTSNLDPITTKIIINVIKSLHGKLTILFVTHDKELMRIADNLIVMKDGQIVEQGDFQQLISNDGEFTKITKTII</sequence>
<dbReference type="EC" id="7.4.2.7"/>
<dbReference type="EMBL" id="U13193">
    <property type="protein sequence ID" value="AAC49910.1"/>
    <property type="molecule type" value="Genomic_DNA"/>
</dbReference>
<dbReference type="EMBL" id="CM000310">
    <property type="protein sequence ID" value="EEQ44685.1"/>
    <property type="molecule type" value="Genomic_DNA"/>
</dbReference>
<dbReference type="PIR" id="T18214">
    <property type="entry name" value="T18214"/>
</dbReference>
<dbReference type="SMR" id="P53706"/>
<dbReference type="GlyCosmos" id="P53706">
    <property type="glycosylation" value="16 sites, No reported glycans"/>
</dbReference>
<dbReference type="PaxDb" id="5476-P53706"/>
<dbReference type="VEuPathDB" id="FungiDB:CAWG_02961"/>
<dbReference type="HOGENOM" id="CLU_000604_17_8_1"/>
<dbReference type="OMA" id="TFWACLT"/>
<dbReference type="OrthoDB" id="12604at766764"/>
<dbReference type="Proteomes" id="UP000001429">
    <property type="component" value="Chromosome 3"/>
</dbReference>
<dbReference type="GO" id="GO:0005743">
    <property type="term" value="C:mitochondrial inner membrane"/>
    <property type="evidence" value="ECO:0007669"/>
    <property type="project" value="TreeGrafter"/>
</dbReference>
<dbReference type="GO" id="GO:0015421">
    <property type="term" value="F:ABC-type oligopeptide transporter activity"/>
    <property type="evidence" value="ECO:0007669"/>
    <property type="project" value="TreeGrafter"/>
</dbReference>
<dbReference type="GO" id="GO:0005524">
    <property type="term" value="F:ATP binding"/>
    <property type="evidence" value="ECO:0007669"/>
    <property type="project" value="UniProtKB-KW"/>
</dbReference>
<dbReference type="GO" id="GO:0016887">
    <property type="term" value="F:ATP hydrolysis activity"/>
    <property type="evidence" value="ECO:0007669"/>
    <property type="project" value="InterPro"/>
</dbReference>
<dbReference type="GO" id="GO:0090374">
    <property type="term" value="P:oligopeptide export from mitochondrion"/>
    <property type="evidence" value="ECO:0007669"/>
    <property type="project" value="TreeGrafter"/>
</dbReference>
<dbReference type="CDD" id="cd18577">
    <property type="entry name" value="ABC_6TM_Pgp_ABCB1_D1_like"/>
    <property type="match status" value="1"/>
</dbReference>
<dbReference type="CDD" id="cd18578">
    <property type="entry name" value="ABC_6TM_Pgp_ABCB1_D2_like"/>
    <property type="match status" value="1"/>
</dbReference>
<dbReference type="CDD" id="cd03228">
    <property type="entry name" value="ABCC_MRP_Like"/>
    <property type="match status" value="2"/>
</dbReference>
<dbReference type="Gene3D" id="1.20.1560.10">
    <property type="entry name" value="ABC transporter type 1, transmembrane domain"/>
    <property type="match status" value="1"/>
</dbReference>
<dbReference type="Gene3D" id="3.40.50.300">
    <property type="entry name" value="P-loop containing nucleotide triphosphate hydrolases"/>
    <property type="match status" value="2"/>
</dbReference>
<dbReference type="InterPro" id="IPR003593">
    <property type="entry name" value="AAA+_ATPase"/>
</dbReference>
<dbReference type="InterPro" id="IPR011527">
    <property type="entry name" value="ABC1_TM_dom"/>
</dbReference>
<dbReference type="InterPro" id="IPR036640">
    <property type="entry name" value="ABC1_TM_sf"/>
</dbReference>
<dbReference type="InterPro" id="IPR003439">
    <property type="entry name" value="ABC_transporter-like_ATP-bd"/>
</dbReference>
<dbReference type="InterPro" id="IPR017871">
    <property type="entry name" value="ABC_transporter-like_CS"/>
</dbReference>
<dbReference type="InterPro" id="IPR027417">
    <property type="entry name" value="P-loop_NTPase"/>
</dbReference>
<dbReference type="InterPro" id="IPR039421">
    <property type="entry name" value="Type_1_exporter"/>
</dbReference>
<dbReference type="PANTHER" id="PTHR43394:SF1">
    <property type="entry name" value="ATP-BINDING CASSETTE SUB-FAMILY B MEMBER 10, MITOCHONDRIAL"/>
    <property type="match status" value="1"/>
</dbReference>
<dbReference type="PANTHER" id="PTHR43394">
    <property type="entry name" value="ATP-DEPENDENT PERMEASE MDL1, MITOCHONDRIAL"/>
    <property type="match status" value="1"/>
</dbReference>
<dbReference type="Pfam" id="PF00664">
    <property type="entry name" value="ABC_membrane"/>
    <property type="match status" value="2"/>
</dbReference>
<dbReference type="Pfam" id="PF00005">
    <property type="entry name" value="ABC_tran"/>
    <property type="match status" value="2"/>
</dbReference>
<dbReference type="SMART" id="SM00382">
    <property type="entry name" value="AAA"/>
    <property type="match status" value="2"/>
</dbReference>
<dbReference type="SUPFAM" id="SSF90123">
    <property type="entry name" value="ABC transporter transmembrane region"/>
    <property type="match status" value="2"/>
</dbReference>
<dbReference type="SUPFAM" id="SSF52540">
    <property type="entry name" value="P-loop containing nucleoside triphosphate hydrolases"/>
    <property type="match status" value="2"/>
</dbReference>
<dbReference type="PROSITE" id="PS50929">
    <property type="entry name" value="ABC_TM1F"/>
    <property type="match status" value="2"/>
</dbReference>
<dbReference type="PROSITE" id="PS00211">
    <property type="entry name" value="ABC_TRANSPORTER_1"/>
    <property type="match status" value="2"/>
</dbReference>
<dbReference type="PROSITE" id="PS50893">
    <property type="entry name" value="ABC_TRANSPORTER_2"/>
    <property type="match status" value="2"/>
</dbReference>
<protein>
    <recommendedName>
        <fullName>Alpha-factor-transporting ATPase</fullName>
        <ecNumber>7.4.2.7</ecNumber>
    </recommendedName>
    <alternativeName>
        <fullName>ATP-dependent permease HST6</fullName>
    </alternativeName>
    <alternativeName>
        <fullName>STE6 homolog</fullName>
    </alternativeName>
</protein>
<feature type="chain" id="PRO_0000093371" description="Alpha-factor-transporting ATPase">
    <location>
        <begin position="1"/>
        <end position="1323"/>
    </location>
</feature>
<feature type="transmembrane region" description="Helical" evidence="3">
    <location>
        <begin position="42"/>
        <end position="62"/>
    </location>
</feature>
<feature type="transmembrane region" description="Helical" evidence="3">
    <location>
        <begin position="93"/>
        <end position="113"/>
    </location>
</feature>
<feature type="transmembrane region" description="Helical" evidence="3">
    <location>
        <begin position="169"/>
        <end position="189"/>
    </location>
</feature>
<feature type="transmembrane region" description="Helical" evidence="3">
    <location>
        <begin position="192"/>
        <end position="212"/>
    </location>
</feature>
<feature type="transmembrane region" description="Helical" evidence="3">
    <location>
        <begin position="281"/>
        <end position="301"/>
    </location>
</feature>
<feature type="transmembrane region" description="Helical" evidence="3">
    <location>
        <begin position="315"/>
        <end position="335"/>
    </location>
</feature>
<feature type="transmembrane region" description="Helical" evidence="3">
    <location>
        <begin position="677"/>
        <end position="697"/>
    </location>
</feature>
<feature type="transmembrane region" description="Helical" evidence="3">
    <location>
        <begin position="724"/>
        <end position="744"/>
    </location>
</feature>
<feature type="transmembrane region" description="Helical" evidence="3">
    <location>
        <begin position="801"/>
        <end position="821"/>
    </location>
</feature>
<feature type="transmembrane region" description="Helical" evidence="3">
    <location>
        <begin position="828"/>
        <end position="848"/>
    </location>
</feature>
<feature type="transmembrane region" description="Helical" evidence="3">
    <location>
        <begin position="909"/>
        <end position="929"/>
    </location>
</feature>
<feature type="transmembrane region" description="Helical" evidence="3">
    <location>
        <begin position="941"/>
        <end position="961"/>
    </location>
</feature>
<feature type="transmembrane region" description="Helical" evidence="3">
    <location>
        <begin position="1120"/>
        <end position="1140"/>
    </location>
</feature>
<feature type="transmembrane region" description="Helical" evidence="3">
    <location>
        <begin position="1170"/>
        <end position="1190"/>
    </location>
</feature>
<feature type="domain" description="ABC transmembrane type-1 1" evidence="3">
    <location>
        <begin position="45"/>
        <end position="337"/>
    </location>
</feature>
<feature type="domain" description="ABC transporter 1" evidence="2">
    <location>
        <begin position="373"/>
        <end position="609"/>
    </location>
</feature>
<feature type="domain" description="ABC transmembrane type-1 2" evidence="3">
    <location>
        <begin position="678"/>
        <end position="969"/>
    </location>
</feature>
<feature type="domain" description="ABC transporter 2" evidence="2">
    <location>
        <begin position="1035"/>
        <end position="1321"/>
    </location>
</feature>
<feature type="region of interest" description="Disordered" evidence="4">
    <location>
        <begin position="1"/>
        <end position="23"/>
    </location>
</feature>
<feature type="region of interest" description="Disordered" evidence="4">
    <location>
        <begin position="1194"/>
        <end position="1217"/>
    </location>
</feature>
<feature type="compositionally biased region" description="Basic and acidic residues" evidence="4">
    <location>
        <begin position="1"/>
        <end position="10"/>
    </location>
</feature>
<feature type="compositionally biased region" description="Low complexity" evidence="4">
    <location>
        <begin position="12"/>
        <end position="23"/>
    </location>
</feature>
<feature type="compositionally biased region" description="Acidic residues" evidence="4">
    <location>
        <begin position="1194"/>
        <end position="1208"/>
    </location>
</feature>
<feature type="binding site" evidence="2">
    <location>
        <begin position="408"/>
        <end position="415"/>
    </location>
    <ligand>
        <name>ATP</name>
        <dbReference type="ChEBI" id="CHEBI:30616"/>
        <label>1</label>
    </ligand>
</feature>
<feature type="binding site" evidence="2">
    <location>
        <begin position="1071"/>
        <end position="1078"/>
    </location>
    <ligand>
        <name>ATP</name>
        <dbReference type="ChEBI" id="CHEBI:30616"/>
        <label>2</label>
    </ligand>
</feature>
<feature type="glycosylation site" description="N-linked (GlcNAc...) asparagine" evidence="1">
    <location>
        <position position="37"/>
    </location>
</feature>
<feature type="glycosylation site" description="N-linked (GlcNAc...) asparagine" evidence="1">
    <location>
        <position position="83"/>
    </location>
</feature>
<feature type="glycosylation site" description="N-linked (GlcNAc...) asparagine" evidence="1">
    <location>
        <position position="136"/>
    </location>
</feature>
<feature type="glycosylation site" description="N-linked (GlcNAc...) asparagine" evidence="1">
    <location>
        <position position="450"/>
    </location>
</feature>
<feature type="glycosylation site" description="N-linked (GlcNAc...) asparagine" evidence="1">
    <location>
        <position position="714"/>
    </location>
</feature>
<feature type="glycosylation site" description="N-linked (GlcNAc...) asparagine" evidence="1">
    <location>
        <position position="777"/>
    </location>
</feature>
<feature type="glycosylation site" description="N-linked (GlcNAc...) asparagine" evidence="1">
    <location>
        <position position="789"/>
    </location>
</feature>
<feature type="glycosylation site" description="N-linked (GlcNAc...) asparagine" evidence="1">
    <location>
        <position position="939"/>
    </location>
</feature>
<feature type="glycosylation site" description="N-linked (GlcNAc...) asparagine" evidence="1">
    <location>
        <position position="991"/>
    </location>
</feature>
<feature type="glycosylation site" description="N-linked (GlcNAc...) asparagine" evidence="1">
    <location>
        <position position="1030"/>
    </location>
</feature>
<feature type="glycosylation site" description="N-linked (GlcNAc...) asparagine" evidence="1">
    <location>
        <position position="1039"/>
    </location>
</feature>
<feature type="glycosylation site" description="N-linked (GlcNAc...) asparagine" evidence="1">
    <location>
        <position position="1097"/>
    </location>
</feature>
<feature type="glycosylation site" description="N-linked (GlcNAc...) asparagine" evidence="1">
    <location>
        <position position="1143"/>
    </location>
</feature>
<feature type="glycosylation site" description="N-linked (GlcNAc...) asparagine" evidence="1">
    <location>
        <position position="1149"/>
    </location>
</feature>
<feature type="glycosylation site" description="N-linked (GlcNAc...) asparagine" evidence="1">
    <location>
        <position position="1157"/>
    </location>
</feature>
<feature type="glycosylation site" description="N-linked (GlcNAc...) asparagine" evidence="1">
    <location>
        <position position="1192"/>
    </location>
</feature>
<name>HST6_CANAW</name>
<reference key="1">
    <citation type="journal article" date="1998" name="Mol. Microbiol.">
        <title>A Ste6p/P-glycoprotein homologue from the asexual yeast Candida albicans transports the a-factor mating pheromone in Saccharomyces cerevisiae.</title>
        <authorList>
            <person name="Raymond M."/>
            <person name="Dignard D."/>
            <person name="Alarco A.-M."/>
            <person name="Mainville N."/>
            <person name="Magee B.B."/>
            <person name="Thomas D.Y."/>
        </authorList>
    </citation>
    <scope>NUCLEOTIDE SEQUENCE [GENOMIC DNA]</scope>
    <source>
        <strain>WO-1</strain>
    </source>
</reference>
<reference key="2">
    <citation type="journal article" date="2009" name="Nature">
        <title>Evolution of pathogenicity and sexual reproduction in eight Candida genomes.</title>
        <authorList>
            <person name="Butler G."/>
            <person name="Rasmussen M.D."/>
            <person name="Lin M.F."/>
            <person name="Santos M.A.S."/>
            <person name="Sakthikumar S."/>
            <person name="Munro C.A."/>
            <person name="Rheinbay E."/>
            <person name="Grabherr M."/>
            <person name="Forche A."/>
            <person name="Reedy J.L."/>
            <person name="Agrafioti I."/>
            <person name="Arnaud M.B."/>
            <person name="Bates S."/>
            <person name="Brown A.J.P."/>
            <person name="Brunke S."/>
            <person name="Costanzo M.C."/>
            <person name="Fitzpatrick D.A."/>
            <person name="de Groot P.W.J."/>
            <person name="Harris D."/>
            <person name="Hoyer L.L."/>
            <person name="Hube B."/>
            <person name="Klis F.M."/>
            <person name="Kodira C."/>
            <person name="Lennard N."/>
            <person name="Logue M.E."/>
            <person name="Martin R."/>
            <person name="Neiman A.M."/>
            <person name="Nikolaou E."/>
            <person name="Quail M.A."/>
            <person name="Quinn J."/>
            <person name="Santos M.C."/>
            <person name="Schmitzberger F.F."/>
            <person name="Sherlock G."/>
            <person name="Shah P."/>
            <person name="Silverstein K.A.T."/>
            <person name="Skrzypek M.S."/>
            <person name="Soll D."/>
            <person name="Staggs R."/>
            <person name="Stansfield I."/>
            <person name="Stumpf M.P.H."/>
            <person name="Sudbery P.E."/>
            <person name="Srikantha T."/>
            <person name="Zeng Q."/>
            <person name="Berman J."/>
            <person name="Berriman M."/>
            <person name="Heitman J."/>
            <person name="Gow N.A.R."/>
            <person name="Lorenz M.C."/>
            <person name="Birren B.W."/>
            <person name="Kellis M."/>
            <person name="Cuomo C.A."/>
        </authorList>
    </citation>
    <scope>NUCLEOTIDE SEQUENCE [LARGE SCALE GENOMIC DNA]</scope>
    <source>
        <strain>WO-1</strain>
    </source>
</reference>
<gene>
    <name type="primary">HST6</name>
    <name type="ORF">CAWG_02961</name>
</gene>